<evidence type="ECO:0000250" key="1">
    <source>
        <dbReference type="UniProtKB" id="B6UFC7"/>
    </source>
</evidence>
<evidence type="ECO:0000255" key="2"/>
<evidence type="ECO:0000305" key="3"/>
<evidence type="ECO:0000312" key="4">
    <source>
        <dbReference type="EMBL" id="BAD25837.1"/>
    </source>
</evidence>
<evidence type="ECO:0000312" key="5">
    <source>
        <dbReference type="EMBL" id="BAF24978.1"/>
    </source>
</evidence>
<evidence type="ECO:0000312" key="6">
    <source>
        <dbReference type="EMBL" id="EEE69620.1"/>
    </source>
</evidence>
<protein>
    <recommendedName>
        <fullName evidence="3">Protein PLASTID REDOX INSENSITIVE 2, chloroplastic</fullName>
    </recommendedName>
</protein>
<accession>Q6H612</accession>
<keyword id="KW-0150">Chloroplast</keyword>
<keyword id="KW-0238">DNA-binding</keyword>
<keyword id="KW-0934">Plastid</keyword>
<keyword id="KW-1185">Reference proteome</keyword>
<keyword id="KW-0804">Transcription</keyword>
<keyword id="KW-0805">Transcription regulation</keyword>
<keyword id="KW-0809">Transit peptide</keyword>
<reference key="1">
    <citation type="journal article" date="2005" name="Nature">
        <title>The map-based sequence of the rice genome.</title>
        <authorList>
            <consortium name="International rice genome sequencing project (IRGSP)"/>
        </authorList>
    </citation>
    <scope>NUCLEOTIDE SEQUENCE [LARGE SCALE GENOMIC DNA]</scope>
    <source>
        <strain>cv. Nipponbare</strain>
    </source>
</reference>
<reference key="2">
    <citation type="journal article" date="2008" name="Nucleic Acids Res.">
        <title>The rice annotation project database (RAP-DB): 2008 update.</title>
        <authorList>
            <consortium name="The rice annotation project (RAP)"/>
        </authorList>
    </citation>
    <scope>GENOME REANNOTATION</scope>
    <source>
        <strain>cv. Nipponbare</strain>
    </source>
</reference>
<reference key="3">
    <citation type="journal article" date="2013" name="Rice">
        <title>Improvement of the Oryza sativa Nipponbare reference genome using next generation sequence and optical map data.</title>
        <authorList>
            <person name="Kawahara Y."/>
            <person name="de la Bastide M."/>
            <person name="Hamilton J.P."/>
            <person name="Kanamori H."/>
            <person name="McCombie W.R."/>
            <person name="Ouyang S."/>
            <person name="Schwartz D.C."/>
            <person name="Tanaka T."/>
            <person name="Wu J."/>
            <person name="Zhou S."/>
            <person name="Childs K.L."/>
            <person name="Davidson R.M."/>
            <person name="Lin H."/>
            <person name="Quesada-Ocampo L."/>
            <person name="Vaillancourt B."/>
            <person name="Sakai H."/>
            <person name="Lee S.S."/>
            <person name="Kim J."/>
            <person name="Numa H."/>
            <person name="Itoh T."/>
            <person name="Buell C.R."/>
            <person name="Matsumoto T."/>
        </authorList>
    </citation>
    <scope>GENOME REANNOTATION</scope>
    <source>
        <strain>cv. Nipponbare</strain>
    </source>
</reference>
<reference key="4">
    <citation type="journal article" date="2005" name="PLoS Biol.">
        <title>The genomes of Oryza sativa: a history of duplications.</title>
        <authorList>
            <person name="Yu J."/>
            <person name="Wang J."/>
            <person name="Lin W."/>
            <person name="Li S."/>
            <person name="Li H."/>
            <person name="Zhou J."/>
            <person name="Ni P."/>
            <person name="Dong W."/>
            <person name="Hu S."/>
            <person name="Zeng C."/>
            <person name="Zhang J."/>
            <person name="Zhang Y."/>
            <person name="Li R."/>
            <person name="Xu Z."/>
            <person name="Li S."/>
            <person name="Li X."/>
            <person name="Zheng H."/>
            <person name="Cong L."/>
            <person name="Lin L."/>
            <person name="Yin J."/>
            <person name="Geng J."/>
            <person name="Li G."/>
            <person name="Shi J."/>
            <person name="Liu J."/>
            <person name="Lv H."/>
            <person name="Li J."/>
            <person name="Wang J."/>
            <person name="Deng Y."/>
            <person name="Ran L."/>
            <person name="Shi X."/>
            <person name="Wang X."/>
            <person name="Wu Q."/>
            <person name="Li C."/>
            <person name="Ren X."/>
            <person name="Wang J."/>
            <person name="Wang X."/>
            <person name="Li D."/>
            <person name="Liu D."/>
            <person name="Zhang X."/>
            <person name="Ji Z."/>
            <person name="Zhao W."/>
            <person name="Sun Y."/>
            <person name="Zhang Z."/>
            <person name="Bao J."/>
            <person name="Han Y."/>
            <person name="Dong L."/>
            <person name="Ji J."/>
            <person name="Chen P."/>
            <person name="Wu S."/>
            <person name="Liu J."/>
            <person name="Xiao Y."/>
            <person name="Bu D."/>
            <person name="Tan J."/>
            <person name="Yang L."/>
            <person name="Ye C."/>
            <person name="Zhang J."/>
            <person name="Xu J."/>
            <person name="Zhou Y."/>
            <person name="Yu Y."/>
            <person name="Zhang B."/>
            <person name="Zhuang S."/>
            <person name="Wei H."/>
            <person name="Liu B."/>
            <person name="Lei M."/>
            <person name="Yu H."/>
            <person name="Li Y."/>
            <person name="Xu H."/>
            <person name="Wei S."/>
            <person name="He X."/>
            <person name="Fang L."/>
            <person name="Zhang Z."/>
            <person name="Zhang Y."/>
            <person name="Huang X."/>
            <person name="Su Z."/>
            <person name="Tong W."/>
            <person name="Li J."/>
            <person name="Tong Z."/>
            <person name="Li S."/>
            <person name="Ye J."/>
            <person name="Wang L."/>
            <person name="Fang L."/>
            <person name="Lei T."/>
            <person name="Chen C.-S."/>
            <person name="Chen H.-C."/>
            <person name="Xu Z."/>
            <person name="Li H."/>
            <person name="Huang H."/>
            <person name="Zhang F."/>
            <person name="Xu H."/>
            <person name="Li N."/>
            <person name="Zhao C."/>
            <person name="Li S."/>
            <person name="Dong L."/>
            <person name="Huang Y."/>
            <person name="Li L."/>
            <person name="Xi Y."/>
            <person name="Qi Q."/>
            <person name="Li W."/>
            <person name="Zhang B."/>
            <person name="Hu W."/>
            <person name="Zhang Y."/>
            <person name="Tian X."/>
            <person name="Jiao Y."/>
            <person name="Liang X."/>
            <person name="Jin J."/>
            <person name="Gao L."/>
            <person name="Zheng W."/>
            <person name="Hao B."/>
            <person name="Liu S.-M."/>
            <person name="Wang W."/>
            <person name="Yuan L."/>
            <person name="Cao M."/>
            <person name="McDermott J."/>
            <person name="Samudrala R."/>
            <person name="Wang J."/>
            <person name="Wong G.K.-S."/>
            <person name="Yang H."/>
        </authorList>
    </citation>
    <scope>NUCLEOTIDE SEQUENCE [LARGE SCALE GENOMIC DNA]</scope>
    <source>
        <strain>cv. Nipponbare</strain>
    </source>
</reference>
<reference key="5">
    <citation type="journal article" date="2003" name="Science">
        <title>Collection, mapping, and annotation of over 28,000 cDNA clones from japonica rice.</title>
        <authorList>
            <consortium name="The rice full-length cDNA consortium"/>
        </authorList>
    </citation>
    <scope>NUCLEOTIDE SEQUENCE [LARGE SCALE MRNA]</scope>
    <source>
        <strain>cv. Nipponbare</strain>
    </source>
</reference>
<name>PRIN2_ORYSJ</name>
<gene>
    <name evidence="3" type="primary">PRIN2</name>
    <name evidence="5" type="ordered locus">Os09g0382400</name>
    <name evidence="3" type="ordered locus">LOC_Os09g21460</name>
    <name evidence="6" type="ORF">OsJ_29199</name>
    <name evidence="4" type="ORF">P0505H05.24</name>
</gene>
<proteinExistence type="evidence at transcript level"/>
<organism>
    <name type="scientific">Oryza sativa subsp. japonica</name>
    <name type="common">Rice</name>
    <dbReference type="NCBI Taxonomy" id="39947"/>
    <lineage>
        <taxon>Eukaryota</taxon>
        <taxon>Viridiplantae</taxon>
        <taxon>Streptophyta</taxon>
        <taxon>Embryophyta</taxon>
        <taxon>Tracheophyta</taxon>
        <taxon>Spermatophyta</taxon>
        <taxon>Magnoliopsida</taxon>
        <taxon>Liliopsida</taxon>
        <taxon>Poales</taxon>
        <taxon>Poaceae</taxon>
        <taxon>BOP clade</taxon>
        <taxon>Oryzoideae</taxon>
        <taxon>Oryzeae</taxon>
        <taxon>Oryzinae</taxon>
        <taxon>Oryza</taxon>
        <taxon>Oryza sativa</taxon>
    </lineage>
</organism>
<feature type="transit peptide" description="Chloroplast" evidence="2">
    <location>
        <begin position="1"/>
        <end position="54"/>
    </location>
</feature>
<feature type="chain" id="PRO_0000441843" description="Protein PLASTID REDOX INSENSITIVE 2, chloroplastic">
    <location>
        <begin position="55"/>
        <end position="172"/>
    </location>
</feature>
<sequence>MAARLWAAAVAPATLNPPLLTLSASSSPSSSRLRRSVLGRLRSRAPRPADFVCRRAKNAAYDDYKFPDPIPEFAAQETSKFKEHMMWRLEQKKDDYFGEHVEEIVDVCTEILGTFLEHDYCGPGTLLVHPFLDMKGEIKERGLPGAPQAARAAIAWAEKNIDKDWKAWTGEY</sequence>
<comment type="function">
    <text evidence="1">Required for the activity of the plastid-encoded RNA polymerase (PEP) and full expression of genes transcribed by PEP.</text>
</comment>
<comment type="subcellular location">
    <subcellularLocation>
        <location evidence="1">Plastid</location>
        <location evidence="1">Chloroplast stroma</location>
        <location evidence="1">Chloroplast nucleoid</location>
    </subcellularLocation>
</comment>
<dbReference type="EMBL" id="AP005312">
    <property type="protein sequence ID" value="BAD25837.1"/>
    <property type="molecule type" value="Genomic_DNA"/>
</dbReference>
<dbReference type="EMBL" id="AP008215">
    <property type="protein sequence ID" value="BAF24978.1"/>
    <property type="molecule type" value="Genomic_DNA"/>
</dbReference>
<dbReference type="EMBL" id="AP014965">
    <property type="protein sequence ID" value="BAT07864.1"/>
    <property type="molecule type" value="Genomic_DNA"/>
</dbReference>
<dbReference type="EMBL" id="CM000146">
    <property type="protein sequence ID" value="EEE69620.1"/>
    <property type="molecule type" value="Genomic_DNA"/>
</dbReference>
<dbReference type="EMBL" id="AK062891">
    <property type="protein sequence ID" value="BAG88481.1"/>
    <property type="molecule type" value="mRNA"/>
</dbReference>
<dbReference type="RefSeq" id="XP_015610957.1">
    <property type="nucleotide sequence ID" value="XM_015755471.1"/>
</dbReference>
<dbReference type="SMR" id="Q6H612"/>
<dbReference type="FunCoup" id="Q6H612">
    <property type="interactions" value="1282"/>
</dbReference>
<dbReference type="STRING" id="39947.Q6H612"/>
<dbReference type="PaxDb" id="39947-Q6H612"/>
<dbReference type="EnsemblPlants" id="Os09t0382400-01">
    <property type="protein sequence ID" value="Os09t0382400-01"/>
    <property type="gene ID" value="Os09g0382400"/>
</dbReference>
<dbReference type="Gramene" id="Os09t0382400-01">
    <property type="protein sequence ID" value="Os09t0382400-01"/>
    <property type="gene ID" value="Os09g0382400"/>
</dbReference>
<dbReference type="KEGG" id="dosa:Os09g0382400"/>
<dbReference type="eggNOG" id="ENOG502S2MJ">
    <property type="taxonomic scope" value="Eukaryota"/>
</dbReference>
<dbReference type="HOGENOM" id="CLU_101160_1_0_1"/>
<dbReference type="InParanoid" id="Q6H612"/>
<dbReference type="OMA" id="ITFICKA"/>
<dbReference type="OrthoDB" id="1924990at2759"/>
<dbReference type="Proteomes" id="UP000000763">
    <property type="component" value="Chromosome 9"/>
</dbReference>
<dbReference type="Proteomes" id="UP000007752">
    <property type="component" value="Chromosome 9"/>
</dbReference>
<dbReference type="Proteomes" id="UP000059680">
    <property type="component" value="Chromosome 9"/>
</dbReference>
<dbReference type="GO" id="GO:0042644">
    <property type="term" value="C:chloroplast nucleoid"/>
    <property type="evidence" value="ECO:0007669"/>
    <property type="project" value="UniProtKB-SubCell"/>
</dbReference>
<dbReference type="GO" id="GO:0003677">
    <property type="term" value="F:DNA binding"/>
    <property type="evidence" value="ECO:0007669"/>
    <property type="project" value="UniProtKB-KW"/>
</dbReference>
<dbReference type="GO" id="GO:0010468">
    <property type="term" value="P:regulation of gene expression"/>
    <property type="evidence" value="ECO:0007669"/>
    <property type="project" value="InterPro"/>
</dbReference>
<dbReference type="InterPro" id="IPR039349">
    <property type="entry name" value="PRIN2"/>
</dbReference>
<dbReference type="PANTHER" id="PTHR35987:SF2">
    <property type="entry name" value="PROTEIN PLASTID REDOX INSENSITIVE 2, CHLOROPLASTIC"/>
    <property type="match status" value="1"/>
</dbReference>
<dbReference type="PANTHER" id="PTHR35987">
    <property type="entry name" value="PROTEIN PLASTID REDOX INSENSITIVE 2, CHLOROPLASTIC-RELATED"/>
    <property type="match status" value="1"/>
</dbReference>